<feature type="chain" id="PRO_0000192241" description="Ribosomal protein L11 methyltransferase">
    <location>
        <begin position="1"/>
        <end position="307"/>
    </location>
</feature>
<feature type="binding site" evidence="1">
    <location>
        <position position="162"/>
    </location>
    <ligand>
        <name>S-adenosyl-L-methionine</name>
        <dbReference type="ChEBI" id="CHEBI:59789"/>
    </ligand>
</feature>
<feature type="binding site" evidence="1">
    <location>
        <position position="183"/>
    </location>
    <ligand>
        <name>S-adenosyl-L-methionine</name>
        <dbReference type="ChEBI" id="CHEBI:59789"/>
    </ligand>
</feature>
<feature type="binding site" evidence="1">
    <location>
        <position position="205"/>
    </location>
    <ligand>
        <name>S-adenosyl-L-methionine</name>
        <dbReference type="ChEBI" id="CHEBI:59789"/>
    </ligand>
</feature>
<feature type="binding site" evidence="1">
    <location>
        <position position="244"/>
    </location>
    <ligand>
        <name>S-adenosyl-L-methionine</name>
        <dbReference type="ChEBI" id="CHEBI:59789"/>
    </ligand>
</feature>
<organism>
    <name type="scientific">Bordetella bronchiseptica (strain ATCC BAA-588 / NCTC 13252 / RB50)</name>
    <name type="common">Alcaligenes bronchisepticus</name>
    <dbReference type="NCBI Taxonomy" id="257310"/>
    <lineage>
        <taxon>Bacteria</taxon>
        <taxon>Pseudomonadati</taxon>
        <taxon>Pseudomonadota</taxon>
        <taxon>Betaproteobacteria</taxon>
        <taxon>Burkholderiales</taxon>
        <taxon>Alcaligenaceae</taxon>
        <taxon>Bordetella</taxon>
    </lineage>
</organism>
<protein>
    <recommendedName>
        <fullName evidence="1">Ribosomal protein L11 methyltransferase</fullName>
        <shortName evidence="1">L11 Mtase</shortName>
        <ecNumber evidence="1">2.1.1.-</ecNumber>
    </recommendedName>
</protein>
<reference key="1">
    <citation type="journal article" date="2003" name="Nat. Genet.">
        <title>Comparative analysis of the genome sequences of Bordetella pertussis, Bordetella parapertussis and Bordetella bronchiseptica.</title>
        <authorList>
            <person name="Parkhill J."/>
            <person name="Sebaihia M."/>
            <person name="Preston A."/>
            <person name="Murphy L.D."/>
            <person name="Thomson N.R."/>
            <person name="Harris D.E."/>
            <person name="Holden M.T.G."/>
            <person name="Churcher C.M."/>
            <person name="Bentley S.D."/>
            <person name="Mungall K.L."/>
            <person name="Cerdeno-Tarraga A.-M."/>
            <person name="Temple L."/>
            <person name="James K.D."/>
            <person name="Harris B."/>
            <person name="Quail M.A."/>
            <person name="Achtman M."/>
            <person name="Atkin R."/>
            <person name="Baker S."/>
            <person name="Basham D."/>
            <person name="Bason N."/>
            <person name="Cherevach I."/>
            <person name="Chillingworth T."/>
            <person name="Collins M."/>
            <person name="Cronin A."/>
            <person name="Davis P."/>
            <person name="Doggett J."/>
            <person name="Feltwell T."/>
            <person name="Goble A."/>
            <person name="Hamlin N."/>
            <person name="Hauser H."/>
            <person name="Holroyd S."/>
            <person name="Jagels K."/>
            <person name="Leather S."/>
            <person name="Moule S."/>
            <person name="Norberczak H."/>
            <person name="O'Neil S."/>
            <person name="Ormond D."/>
            <person name="Price C."/>
            <person name="Rabbinowitsch E."/>
            <person name="Rutter S."/>
            <person name="Sanders M."/>
            <person name="Saunders D."/>
            <person name="Seeger K."/>
            <person name="Sharp S."/>
            <person name="Simmonds M."/>
            <person name="Skelton J."/>
            <person name="Squares R."/>
            <person name="Squares S."/>
            <person name="Stevens K."/>
            <person name="Unwin L."/>
            <person name="Whitehead S."/>
            <person name="Barrell B.G."/>
            <person name="Maskell D.J."/>
        </authorList>
    </citation>
    <scope>NUCLEOTIDE SEQUENCE [LARGE SCALE GENOMIC DNA]</scope>
    <source>
        <strain>ATCC BAA-588 / NCTC 13252 / RB50</strain>
    </source>
</reference>
<evidence type="ECO:0000255" key="1">
    <source>
        <dbReference type="HAMAP-Rule" id="MF_00735"/>
    </source>
</evidence>
<gene>
    <name evidence="1" type="primary">prmA</name>
    <name type="ordered locus">BB4388</name>
</gene>
<dbReference type="EC" id="2.1.1.-" evidence="1"/>
<dbReference type="EMBL" id="BX640450">
    <property type="protein sequence ID" value="CAE34751.1"/>
    <property type="molecule type" value="Genomic_DNA"/>
</dbReference>
<dbReference type="RefSeq" id="WP_003814950.1">
    <property type="nucleotide sequence ID" value="NC_002927.3"/>
</dbReference>
<dbReference type="SMR" id="Q7WF92"/>
<dbReference type="GeneID" id="56477113"/>
<dbReference type="KEGG" id="bbr:BB4388"/>
<dbReference type="eggNOG" id="COG2264">
    <property type="taxonomic scope" value="Bacteria"/>
</dbReference>
<dbReference type="HOGENOM" id="CLU_049382_4_1_4"/>
<dbReference type="Proteomes" id="UP000001027">
    <property type="component" value="Chromosome"/>
</dbReference>
<dbReference type="GO" id="GO:0005829">
    <property type="term" value="C:cytosol"/>
    <property type="evidence" value="ECO:0007669"/>
    <property type="project" value="TreeGrafter"/>
</dbReference>
<dbReference type="GO" id="GO:0016279">
    <property type="term" value="F:protein-lysine N-methyltransferase activity"/>
    <property type="evidence" value="ECO:0007669"/>
    <property type="project" value="TreeGrafter"/>
</dbReference>
<dbReference type="GO" id="GO:0032259">
    <property type="term" value="P:methylation"/>
    <property type="evidence" value="ECO:0007669"/>
    <property type="project" value="UniProtKB-KW"/>
</dbReference>
<dbReference type="CDD" id="cd02440">
    <property type="entry name" value="AdoMet_MTases"/>
    <property type="match status" value="1"/>
</dbReference>
<dbReference type="Gene3D" id="3.40.50.150">
    <property type="entry name" value="Vaccinia Virus protein VP39"/>
    <property type="match status" value="1"/>
</dbReference>
<dbReference type="HAMAP" id="MF_00735">
    <property type="entry name" value="Methyltr_PrmA"/>
    <property type="match status" value="1"/>
</dbReference>
<dbReference type="InterPro" id="IPR050078">
    <property type="entry name" value="Ribosomal_L11_MeTrfase_PrmA"/>
</dbReference>
<dbReference type="InterPro" id="IPR004498">
    <property type="entry name" value="Ribosomal_PrmA_MeTrfase"/>
</dbReference>
<dbReference type="InterPro" id="IPR029063">
    <property type="entry name" value="SAM-dependent_MTases_sf"/>
</dbReference>
<dbReference type="NCBIfam" id="TIGR00406">
    <property type="entry name" value="prmA"/>
    <property type="match status" value="1"/>
</dbReference>
<dbReference type="PANTHER" id="PTHR43648">
    <property type="entry name" value="ELECTRON TRANSFER FLAVOPROTEIN BETA SUBUNIT LYSINE METHYLTRANSFERASE"/>
    <property type="match status" value="1"/>
</dbReference>
<dbReference type="PANTHER" id="PTHR43648:SF1">
    <property type="entry name" value="ELECTRON TRANSFER FLAVOPROTEIN BETA SUBUNIT LYSINE METHYLTRANSFERASE"/>
    <property type="match status" value="1"/>
</dbReference>
<dbReference type="Pfam" id="PF06325">
    <property type="entry name" value="PrmA"/>
    <property type="match status" value="1"/>
</dbReference>
<dbReference type="PIRSF" id="PIRSF000401">
    <property type="entry name" value="RPL11_MTase"/>
    <property type="match status" value="1"/>
</dbReference>
<dbReference type="SUPFAM" id="SSF53335">
    <property type="entry name" value="S-adenosyl-L-methionine-dependent methyltransferases"/>
    <property type="match status" value="1"/>
</dbReference>
<accession>Q7WF92</accession>
<proteinExistence type="inferred from homology"/>
<comment type="function">
    <text evidence="1">Methylates ribosomal protein L11.</text>
</comment>
<comment type="catalytic activity">
    <reaction evidence="1">
        <text>L-lysyl-[protein] + 3 S-adenosyl-L-methionine = N(6),N(6),N(6)-trimethyl-L-lysyl-[protein] + 3 S-adenosyl-L-homocysteine + 3 H(+)</text>
        <dbReference type="Rhea" id="RHEA:54192"/>
        <dbReference type="Rhea" id="RHEA-COMP:9752"/>
        <dbReference type="Rhea" id="RHEA-COMP:13826"/>
        <dbReference type="ChEBI" id="CHEBI:15378"/>
        <dbReference type="ChEBI" id="CHEBI:29969"/>
        <dbReference type="ChEBI" id="CHEBI:57856"/>
        <dbReference type="ChEBI" id="CHEBI:59789"/>
        <dbReference type="ChEBI" id="CHEBI:61961"/>
    </reaction>
</comment>
<comment type="subcellular location">
    <subcellularLocation>
        <location evidence="1">Cytoplasm</location>
    </subcellularLocation>
</comment>
<comment type="similarity">
    <text evidence="1">Belongs to the methyltransferase superfamily. PrmA family.</text>
</comment>
<keyword id="KW-0963">Cytoplasm</keyword>
<keyword id="KW-0489">Methyltransferase</keyword>
<keyword id="KW-0949">S-adenosyl-L-methionine</keyword>
<keyword id="KW-0808">Transferase</keyword>
<name>PRMA_BORBR</name>
<sequence length="307" mass="32547">MRELVLNCREAQADALSDALLEAGVLSVSVEDADLGTEAERPLFGEPGTEPQVQAWERNCVVALLPDGADPAQILEQAIAAAGLDPALAHGWSLREVPDADWVRLTQSQFGPIPISERLWIVPSWHRDDPAVPGLVPDAARDAIHIELDPGLAFGTGSHPTTHLCLAWLEAELPAGARLLDYGCGSGILAIAARKLGAGETVAVDIDPQAVQSTVDNAEVNQVRLQAMLPDALPAGEFQVVVANILSNPLKVLAPMLAGRVAPGGHLVLSGVLERQADEVAAAYAPWLTMSVWRERDGWVCLHGVKA</sequence>